<reference key="1">
    <citation type="journal article" date="1986" name="Eur. J. Biochem.">
        <title>Nucleotide sequence and transcription of the fbc operon from Rhodopseudomonas sphaeroides. Evaluation of the deduced amino acid sequences of the FeS protein, cytochrome b and cytochrome c1.</title>
        <authorList>
            <person name="Gabellini N."/>
            <person name="Sebald W."/>
        </authorList>
    </citation>
    <scope>NUCLEOTIDE SEQUENCE [GENOMIC DNA]</scope>
    <source>
        <strain>GA</strain>
    </source>
</reference>
<reference key="2">
    <citation type="journal article" date="1987" name="J. Mol. Biol.">
        <title>fbc operon, encoding the Rieske Fe-S protein cytochrome b, and cytochrome c1 apoproteins previously described from Rhodopseudomonas sphaeroides, is from Rhodopseudomonas capsulata.</title>
        <authorList>
            <person name="Davidson E."/>
            <person name="Daldal F."/>
        </authorList>
    </citation>
    <scope>SHOWS THAT SEQUENCE DESCRIBED IN PUBMED:3004982 ORIGINATES FROM RHODOBACTER CAPSULATUS</scope>
</reference>
<name>CY1_RHOCA</name>
<keyword id="KW-0002">3D-structure</keyword>
<keyword id="KW-1003">Cell membrane</keyword>
<keyword id="KW-0249">Electron transport</keyword>
<keyword id="KW-0349">Heme</keyword>
<keyword id="KW-0408">Iron</keyword>
<keyword id="KW-0472">Membrane</keyword>
<keyword id="KW-0479">Metal-binding</keyword>
<keyword id="KW-0679">Respiratory chain</keyword>
<keyword id="KW-0732">Signal</keyword>
<keyword id="KW-0812">Transmembrane</keyword>
<keyword id="KW-1133">Transmembrane helix</keyword>
<keyword id="KW-0813">Transport</keyword>
<sequence length="280" mass="30383">MKKLLISAVSALVLGSGAALANSNVQDHAFSFEGIFGKFDQAQLRRGFQVYSEVCSTCHGMKFVPIRTLSDDGGPQLDPTFVREYAAGLDTIIDKDSGEERDRKETDMFPTRVGDGMGPDLSVMAKARAGFSGPAGSGMNQLFKGIGGPEYIYRYVTGFPEENPACAPEGIDGYYYNEVFQVGGVPDTCKDAAGIKTTHGSWAQMPPALFDDLVTYEDGTPATVDQMGQDVASFLMWAAEPKLVARKQMGLVAVVMLGLLSVMLYLTNKRLWAPYKRQKA</sequence>
<gene>
    <name type="primary">petC</name>
</gene>
<dbReference type="EMBL" id="X03476">
    <property type="protein sequence ID" value="CAA27196.1"/>
    <property type="molecule type" value="Genomic_DNA"/>
</dbReference>
<dbReference type="PIR" id="C25405">
    <property type="entry name" value="C25405"/>
</dbReference>
<dbReference type="RefSeq" id="WP_081348877.1">
    <property type="nucleotide sequence ID" value="NZ_CP119563.1"/>
</dbReference>
<dbReference type="PDB" id="1ZRT">
    <property type="method" value="X-ray"/>
    <property type="resolution" value="3.50 A"/>
    <property type="chains" value="D/Q=22-280"/>
</dbReference>
<dbReference type="PDBsum" id="1ZRT"/>
<dbReference type="SMR" id="P0CY49"/>
<dbReference type="OrthoDB" id="9808471at2"/>
<dbReference type="EvolutionaryTrace" id="P0CY49"/>
<dbReference type="GO" id="GO:0005886">
    <property type="term" value="C:plasma membrane"/>
    <property type="evidence" value="ECO:0007669"/>
    <property type="project" value="UniProtKB-SubCell"/>
</dbReference>
<dbReference type="GO" id="GO:0009055">
    <property type="term" value="F:electron transfer activity"/>
    <property type="evidence" value="ECO:0007669"/>
    <property type="project" value="InterPro"/>
</dbReference>
<dbReference type="GO" id="GO:0020037">
    <property type="term" value="F:heme binding"/>
    <property type="evidence" value="ECO:0007669"/>
    <property type="project" value="InterPro"/>
</dbReference>
<dbReference type="GO" id="GO:0046872">
    <property type="term" value="F:metal ion binding"/>
    <property type="evidence" value="ECO:0007669"/>
    <property type="project" value="UniProtKB-KW"/>
</dbReference>
<dbReference type="Gene3D" id="1.10.760.10">
    <property type="entry name" value="Cytochrome c-like domain"/>
    <property type="match status" value="1"/>
</dbReference>
<dbReference type="Gene3D" id="1.20.5.100">
    <property type="entry name" value="Cytochrome c1, transmembrane anchor, C-terminal"/>
    <property type="match status" value="1"/>
</dbReference>
<dbReference type="InterPro" id="IPR009056">
    <property type="entry name" value="Cyt_c-like_dom"/>
</dbReference>
<dbReference type="InterPro" id="IPR036909">
    <property type="entry name" value="Cyt_c-like_dom_sf"/>
</dbReference>
<dbReference type="InterPro" id="IPR002326">
    <property type="entry name" value="Cyt_c1"/>
</dbReference>
<dbReference type="PANTHER" id="PTHR10266">
    <property type="entry name" value="CYTOCHROME C1"/>
    <property type="match status" value="1"/>
</dbReference>
<dbReference type="PANTHER" id="PTHR10266:SF3">
    <property type="entry name" value="CYTOCHROME C1, HEME PROTEIN, MITOCHONDRIAL"/>
    <property type="match status" value="1"/>
</dbReference>
<dbReference type="Pfam" id="PF02167">
    <property type="entry name" value="Cytochrom_C1"/>
    <property type="match status" value="1"/>
</dbReference>
<dbReference type="PRINTS" id="PR00603">
    <property type="entry name" value="CYTOCHROMEC1"/>
</dbReference>
<dbReference type="SUPFAM" id="SSF46626">
    <property type="entry name" value="Cytochrome c"/>
    <property type="match status" value="1"/>
</dbReference>
<dbReference type="PROSITE" id="PS51007">
    <property type="entry name" value="CYTC"/>
    <property type="match status" value="1"/>
</dbReference>
<evidence type="ECO:0000255" key="1"/>
<evidence type="ECO:0000255" key="2">
    <source>
        <dbReference type="PROSITE-ProRule" id="PRU00433"/>
    </source>
</evidence>
<evidence type="ECO:0000305" key="3"/>
<evidence type="ECO:0000305" key="4">
    <source>
    </source>
</evidence>
<evidence type="ECO:0007829" key="5">
    <source>
        <dbReference type="PDB" id="1ZRT"/>
    </source>
</evidence>
<accession>P0CY49</accession>
<accession>P07058</accession>
<accession>P08501</accession>
<protein>
    <recommendedName>
        <fullName>Cytochrome c1</fullName>
    </recommendedName>
</protein>
<feature type="signal peptide">
    <location>
        <begin position="1"/>
        <end position="21"/>
    </location>
</feature>
<feature type="chain" id="PRO_0000006561" description="Cytochrome c1">
    <location>
        <begin position="22"/>
        <end position="280"/>
    </location>
</feature>
<feature type="transmembrane region" description="Helical; Note=Anchors to the membrane" evidence="1">
    <location>
        <begin position="249"/>
        <end position="267"/>
    </location>
</feature>
<feature type="binding site" description="covalent">
    <location>
        <position position="55"/>
    </location>
    <ligand>
        <name>heme c</name>
        <dbReference type="ChEBI" id="CHEBI:61717"/>
    </ligand>
</feature>
<feature type="binding site" description="covalent">
    <location>
        <position position="58"/>
    </location>
    <ligand>
        <name>heme c</name>
        <dbReference type="ChEBI" id="CHEBI:61717"/>
    </ligand>
</feature>
<feature type="binding site" description="axial binding residue">
    <location>
        <position position="59"/>
    </location>
    <ligand>
        <name>heme c</name>
        <dbReference type="ChEBI" id="CHEBI:61717"/>
    </ligand>
    <ligandPart>
        <name>Fe</name>
        <dbReference type="ChEBI" id="CHEBI:18248"/>
    </ligandPart>
</feature>
<feature type="binding site" description="axial binding residue" evidence="2">
    <location>
        <position position="205"/>
    </location>
    <ligand>
        <name>heme c</name>
        <dbReference type="ChEBI" id="CHEBI:61717"/>
    </ligand>
    <ligandPart>
        <name>Fe</name>
        <dbReference type="ChEBI" id="CHEBI:18248"/>
    </ligandPart>
</feature>
<feature type="strand" evidence="5">
    <location>
        <begin position="31"/>
        <end position="36"/>
    </location>
</feature>
<feature type="helix" evidence="5">
    <location>
        <begin position="41"/>
        <end position="53"/>
    </location>
</feature>
<feature type="turn" evidence="5">
    <location>
        <begin position="54"/>
        <end position="58"/>
    </location>
</feature>
<feature type="helix" evidence="5">
    <location>
        <begin position="66"/>
        <end position="68"/>
    </location>
</feature>
<feature type="strand" evidence="5">
    <location>
        <begin position="69"/>
        <end position="74"/>
    </location>
</feature>
<feature type="helix" evidence="5">
    <location>
        <begin position="79"/>
        <end position="88"/>
    </location>
</feature>
<feature type="strand" evidence="5">
    <location>
        <begin position="95"/>
        <end position="97"/>
    </location>
</feature>
<feature type="strand" evidence="5">
    <location>
        <begin position="114"/>
        <end position="116"/>
    </location>
</feature>
<feature type="turn" evidence="5">
    <location>
        <begin position="122"/>
        <end position="124"/>
    </location>
</feature>
<feature type="helix" evidence="5">
    <location>
        <begin position="125"/>
        <end position="127"/>
    </location>
</feature>
<feature type="helix" evidence="5">
    <location>
        <begin position="149"/>
        <end position="156"/>
    </location>
</feature>
<feature type="strand" evidence="5">
    <location>
        <begin position="194"/>
        <end position="196"/>
    </location>
</feature>
<feature type="helix" evidence="5">
    <location>
        <begin position="224"/>
        <end position="239"/>
    </location>
</feature>
<feature type="helix" evidence="5">
    <location>
        <begin position="243"/>
        <end position="272"/>
    </location>
</feature>
<feature type="strand" evidence="5">
    <location>
        <begin position="276"/>
        <end position="278"/>
    </location>
</feature>
<comment type="function">
    <text>Component of the ubiquinol-cytochrome c reductase complex (complex III or cytochrome b-c1 complex), which is a respiratory chain that generates an electrochemical potential coupled to ATP synthesis. c1 functions as an electron donor to cytochrome c.</text>
</comment>
<comment type="subunit">
    <text>The main subunits of complex b-c1 are: cytochrome b, cytochrome c1 and the Rieske protein.</text>
</comment>
<comment type="subcellular location">
    <subcellularLocation>
        <location evidence="3">Cell membrane</location>
        <topology evidence="3">Single-pass membrane protein</topology>
    </subcellularLocation>
</comment>
<comment type="PTM">
    <text>Binds 1 heme c group covalently per subunit.</text>
</comment>
<comment type="caution">
    <text evidence="4">The sequence reported in PubMed:3004982 was thought to originate from R.sphaeroides but was later shown to be derived from R.capsulatus.</text>
</comment>
<organism>
    <name type="scientific">Rhodobacter capsulatus</name>
    <name type="common">Rhodopseudomonas capsulata</name>
    <dbReference type="NCBI Taxonomy" id="1061"/>
    <lineage>
        <taxon>Bacteria</taxon>
        <taxon>Pseudomonadati</taxon>
        <taxon>Pseudomonadota</taxon>
        <taxon>Alphaproteobacteria</taxon>
        <taxon>Rhodobacterales</taxon>
        <taxon>Rhodobacter group</taxon>
        <taxon>Rhodobacter</taxon>
    </lineage>
</organism>
<proteinExistence type="evidence at protein level"/>